<evidence type="ECO:0000255" key="1">
    <source>
        <dbReference type="HAMAP-Rule" id="MF_00687"/>
    </source>
</evidence>
<accession>B2K682</accession>
<name>KDUI_YERPB</name>
<reference key="1">
    <citation type="submission" date="2008-04" db="EMBL/GenBank/DDBJ databases">
        <title>Complete sequence of Yersinia pseudotuberculosis PB1/+.</title>
        <authorList>
            <person name="Copeland A."/>
            <person name="Lucas S."/>
            <person name="Lapidus A."/>
            <person name="Glavina del Rio T."/>
            <person name="Dalin E."/>
            <person name="Tice H."/>
            <person name="Bruce D."/>
            <person name="Goodwin L."/>
            <person name="Pitluck S."/>
            <person name="Munk A.C."/>
            <person name="Brettin T."/>
            <person name="Detter J.C."/>
            <person name="Han C."/>
            <person name="Tapia R."/>
            <person name="Schmutz J."/>
            <person name="Larimer F."/>
            <person name="Land M."/>
            <person name="Hauser L."/>
            <person name="Challacombe J.F."/>
            <person name="Green L."/>
            <person name="Lindler L.E."/>
            <person name="Nikolich M.P."/>
            <person name="Richardson P."/>
        </authorList>
    </citation>
    <scope>NUCLEOTIDE SEQUENCE [LARGE SCALE GENOMIC DNA]</scope>
    <source>
        <strain>PB1/+</strain>
    </source>
</reference>
<sequence length="278" mass="31097">MQVRQSIHSDHAKQLDTAGLRREFLIEKIFAADDYTMTYSHIDRIIVGGILPVSKAVSIGNEVGKQLGVSYFLERRELGAINIGGPGLIVVDGQTYEIGNEEALYVGKGAKEVKFSSIDRANPAKFYYNSAPAHTTYPNKKITLAEASPQTLGDDATSNRRTINKYIVPDVLPTCQLSMGLTKLAPGSLWNTMPCHTHERRMEVYFYFDMDEETAVFHMMGQPQETRHLLVHNEQAVISPSWSIHSGVGTKRYTFIWGMVGENQVFGDMDHIAVSELR</sequence>
<comment type="function">
    <text evidence="1">Catalyzes the isomerization of 5-dehydro-4-deoxy-D-glucuronate to 3-deoxy-D-glycero-2,5-hexodiulosonate.</text>
</comment>
<comment type="catalytic activity">
    <reaction evidence="1">
        <text>5-dehydro-4-deoxy-D-glucuronate = 3-deoxy-D-glycero-2,5-hexodiulosonate</text>
        <dbReference type="Rhea" id="RHEA:23896"/>
        <dbReference type="ChEBI" id="CHEBI:17117"/>
        <dbReference type="ChEBI" id="CHEBI:29071"/>
        <dbReference type="EC" id="5.3.1.17"/>
    </reaction>
</comment>
<comment type="cofactor">
    <cofactor evidence="1">
        <name>Zn(2+)</name>
        <dbReference type="ChEBI" id="CHEBI:29105"/>
    </cofactor>
    <text evidence="1">Binds 1 zinc ion per subunit.</text>
</comment>
<comment type="pathway">
    <text evidence="1">Glycan metabolism; pectin degradation; 2-dehydro-3-deoxy-D-gluconate from pectin: step 4/5.</text>
</comment>
<comment type="similarity">
    <text evidence="1">Belongs to the KduI family.</text>
</comment>
<keyword id="KW-0413">Isomerase</keyword>
<keyword id="KW-0479">Metal-binding</keyword>
<keyword id="KW-0862">Zinc</keyword>
<organism>
    <name type="scientific">Yersinia pseudotuberculosis serotype IB (strain PB1/+)</name>
    <dbReference type="NCBI Taxonomy" id="502801"/>
    <lineage>
        <taxon>Bacteria</taxon>
        <taxon>Pseudomonadati</taxon>
        <taxon>Pseudomonadota</taxon>
        <taxon>Gammaproteobacteria</taxon>
        <taxon>Enterobacterales</taxon>
        <taxon>Yersiniaceae</taxon>
        <taxon>Yersinia</taxon>
    </lineage>
</organism>
<dbReference type="EC" id="5.3.1.17" evidence="1"/>
<dbReference type="EMBL" id="CP001048">
    <property type="protein sequence ID" value="ACC89391.1"/>
    <property type="molecule type" value="Genomic_DNA"/>
</dbReference>
<dbReference type="RefSeq" id="WP_012105015.1">
    <property type="nucleotide sequence ID" value="NZ_CP009780.1"/>
</dbReference>
<dbReference type="SMR" id="B2K682"/>
<dbReference type="KEGG" id="ypb:YPTS_2430"/>
<dbReference type="PATRIC" id="fig|502801.10.peg.1839"/>
<dbReference type="UniPathway" id="UPA00545">
    <property type="reaction ID" value="UER00826"/>
</dbReference>
<dbReference type="GO" id="GO:0008697">
    <property type="term" value="F:4-deoxy-L-threo-5-hexosulose-uronate ketol-isomerase activity"/>
    <property type="evidence" value="ECO:0007669"/>
    <property type="project" value="UniProtKB-UniRule"/>
</dbReference>
<dbReference type="GO" id="GO:0008270">
    <property type="term" value="F:zinc ion binding"/>
    <property type="evidence" value="ECO:0007669"/>
    <property type="project" value="UniProtKB-UniRule"/>
</dbReference>
<dbReference type="GO" id="GO:0019698">
    <property type="term" value="P:D-galacturonate catabolic process"/>
    <property type="evidence" value="ECO:0007669"/>
    <property type="project" value="TreeGrafter"/>
</dbReference>
<dbReference type="GO" id="GO:0042840">
    <property type="term" value="P:D-glucuronate catabolic process"/>
    <property type="evidence" value="ECO:0007669"/>
    <property type="project" value="TreeGrafter"/>
</dbReference>
<dbReference type="GO" id="GO:0045490">
    <property type="term" value="P:pectin catabolic process"/>
    <property type="evidence" value="ECO:0007669"/>
    <property type="project" value="UniProtKB-UniRule"/>
</dbReference>
<dbReference type="CDD" id="cd20491">
    <property type="entry name" value="cupin_KduI_C"/>
    <property type="match status" value="1"/>
</dbReference>
<dbReference type="CDD" id="cd20294">
    <property type="entry name" value="cupin_KduI_N"/>
    <property type="match status" value="1"/>
</dbReference>
<dbReference type="FunFam" id="2.60.120.10:FF:000018">
    <property type="entry name" value="4-deoxy-L-threo-5-hexosulose-uronate ketol-isomerase"/>
    <property type="match status" value="1"/>
</dbReference>
<dbReference type="FunFam" id="2.60.120.520:FF:000001">
    <property type="entry name" value="4-deoxy-L-threo-5-hexosulose-uronate ketol-isomerase"/>
    <property type="match status" value="1"/>
</dbReference>
<dbReference type="Gene3D" id="2.60.120.10">
    <property type="entry name" value="Jelly Rolls"/>
    <property type="match status" value="1"/>
</dbReference>
<dbReference type="Gene3D" id="2.60.120.520">
    <property type="entry name" value="pectin degrading enzyme 5-keto 4- deoxyuronate isomerase, domain 1"/>
    <property type="match status" value="1"/>
</dbReference>
<dbReference type="HAMAP" id="MF_00687">
    <property type="entry name" value="KduI"/>
    <property type="match status" value="1"/>
</dbReference>
<dbReference type="InterPro" id="IPR007045">
    <property type="entry name" value="KduI"/>
</dbReference>
<dbReference type="InterPro" id="IPR021120">
    <property type="entry name" value="KduI/IolB_isomerase"/>
</dbReference>
<dbReference type="InterPro" id="IPR027449">
    <property type="entry name" value="KduI_N"/>
</dbReference>
<dbReference type="InterPro" id="IPR014710">
    <property type="entry name" value="RmlC-like_jellyroll"/>
</dbReference>
<dbReference type="InterPro" id="IPR011051">
    <property type="entry name" value="RmlC_Cupin_sf"/>
</dbReference>
<dbReference type="NCBIfam" id="NF002091">
    <property type="entry name" value="PRK00924.1"/>
    <property type="match status" value="1"/>
</dbReference>
<dbReference type="PANTHER" id="PTHR38461">
    <property type="entry name" value="4-DEOXY-L-THREO-5-HEXOSULOSE-URONATE KETOL-ISOMERASE"/>
    <property type="match status" value="1"/>
</dbReference>
<dbReference type="PANTHER" id="PTHR38461:SF1">
    <property type="entry name" value="4-DEOXY-L-THREO-5-HEXOSULOSE-URONATE KETOL-ISOMERASE"/>
    <property type="match status" value="1"/>
</dbReference>
<dbReference type="Pfam" id="PF04962">
    <property type="entry name" value="KduI"/>
    <property type="match status" value="1"/>
</dbReference>
<dbReference type="PIRSF" id="PIRSF006625">
    <property type="entry name" value="KduI"/>
    <property type="match status" value="1"/>
</dbReference>
<dbReference type="SUPFAM" id="SSF51182">
    <property type="entry name" value="RmlC-like cupins"/>
    <property type="match status" value="1"/>
</dbReference>
<feature type="chain" id="PRO_1000131898" description="4-deoxy-L-threo-5-hexosulose-uronate ketol-isomerase">
    <location>
        <begin position="1"/>
        <end position="278"/>
    </location>
</feature>
<feature type="binding site" evidence="1">
    <location>
        <position position="196"/>
    </location>
    <ligand>
        <name>Zn(2+)</name>
        <dbReference type="ChEBI" id="CHEBI:29105"/>
    </ligand>
</feature>
<feature type="binding site" evidence="1">
    <location>
        <position position="198"/>
    </location>
    <ligand>
        <name>Zn(2+)</name>
        <dbReference type="ChEBI" id="CHEBI:29105"/>
    </ligand>
</feature>
<feature type="binding site" evidence="1">
    <location>
        <position position="203"/>
    </location>
    <ligand>
        <name>Zn(2+)</name>
        <dbReference type="ChEBI" id="CHEBI:29105"/>
    </ligand>
</feature>
<feature type="binding site" evidence="1">
    <location>
        <position position="245"/>
    </location>
    <ligand>
        <name>Zn(2+)</name>
        <dbReference type="ChEBI" id="CHEBI:29105"/>
    </ligand>
</feature>
<proteinExistence type="inferred from homology"/>
<protein>
    <recommendedName>
        <fullName evidence="1">4-deoxy-L-threo-5-hexosulose-uronate ketol-isomerase</fullName>
        <ecNumber evidence="1">5.3.1.17</ecNumber>
    </recommendedName>
    <alternativeName>
        <fullName evidence="1">5-keto-4-deoxyuronate isomerase</fullName>
    </alternativeName>
    <alternativeName>
        <fullName evidence="1">DKI isomerase</fullName>
    </alternativeName>
</protein>
<gene>
    <name evidence="1" type="primary">kduI</name>
    <name type="ordered locus">YPTS_2430</name>
</gene>